<proteinExistence type="evidence at protein level"/>
<keyword id="KW-0025">Alternative splicing</keyword>
<keyword id="KW-0963">Cytoplasm</keyword>
<keyword id="KW-0648">Protein biosynthesis</keyword>
<keyword id="KW-0663">Pyridoxal phosphate</keyword>
<keyword id="KW-1185">Reference proteome</keyword>
<keyword id="KW-0694">RNA-binding</keyword>
<keyword id="KW-0711">Selenium</keyword>
<keyword id="KW-0808">Transferase</keyword>
<keyword id="KW-0820">tRNA-binding</keyword>
<evidence type="ECO:0000250" key="1">
    <source>
        <dbReference type="UniProtKB" id="Q6P6M7"/>
    </source>
</evidence>
<evidence type="ECO:0000250" key="2">
    <source>
        <dbReference type="UniProtKB" id="Q9HD40"/>
    </source>
</evidence>
<evidence type="ECO:0000305" key="3"/>
<organism>
    <name type="scientific">Caenorhabditis elegans</name>
    <dbReference type="NCBI Taxonomy" id="6239"/>
    <lineage>
        <taxon>Eukaryota</taxon>
        <taxon>Metazoa</taxon>
        <taxon>Ecdysozoa</taxon>
        <taxon>Nematoda</taxon>
        <taxon>Chromadorea</taxon>
        <taxon>Rhabditida</taxon>
        <taxon>Rhabditina</taxon>
        <taxon>Rhabditomorpha</taxon>
        <taxon>Rhabditoidea</taxon>
        <taxon>Rhabditidae</taxon>
        <taxon>Peloderinae</taxon>
        <taxon>Caenorhabditis</taxon>
    </lineage>
</organism>
<accession>Q18953</accession>
<accession>B5U8M4</accession>
<comment type="function">
    <text evidence="2">Converts O-phosphoseryl-tRNA(Sec) to selenocysteinyl-tRNA(Sec) required for selenoprotein biosynthesis.</text>
</comment>
<comment type="catalytic activity">
    <reaction evidence="2">
        <text>O-phospho-L-seryl-tRNA(Sec) + selenophosphate + H2O = L-selenocysteinyl-tRNA(Sec) + 2 phosphate</text>
        <dbReference type="Rhea" id="RHEA:25041"/>
        <dbReference type="Rhea" id="RHEA-COMP:9743"/>
        <dbReference type="Rhea" id="RHEA-COMP:9947"/>
        <dbReference type="ChEBI" id="CHEBI:15377"/>
        <dbReference type="ChEBI" id="CHEBI:16144"/>
        <dbReference type="ChEBI" id="CHEBI:43474"/>
        <dbReference type="ChEBI" id="CHEBI:78551"/>
        <dbReference type="ChEBI" id="CHEBI:78573"/>
        <dbReference type="EC" id="2.9.1.2"/>
    </reaction>
</comment>
<comment type="cofactor">
    <cofactor evidence="2">
        <name>pyridoxal 5'-phosphate</name>
        <dbReference type="ChEBI" id="CHEBI:597326"/>
    </cofactor>
</comment>
<comment type="pathway">
    <text evidence="2">Aminoacyl-tRNA biosynthesis; selenocysteinyl-tRNA(Sec) biosynthesis; selenocysteinyl-tRNA(Sec) from L-seryl-tRNA(Sec) (archaeal/eukaryal route): step 2/2.</text>
</comment>
<comment type="subunit">
    <text evidence="2">Homotetramer formed by a catalytic dimer and a non-catalytic dimer serving as a binding platform that orients tRNASec for catalysis. Each tetramer binds the CCA ends of two tRNAs which point to the active sites of the catalytic dimer.</text>
</comment>
<comment type="interaction">
    <interactant intactId="EBI-318539">
        <id>Q18953</id>
    </interactant>
    <interactant intactId="EBI-2315883">
        <id>P03949</id>
        <label>abl-1</label>
    </interactant>
    <organismsDiffer>false</organismsDiffer>
    <experiments>7</experiments>
</comment>
<comment type="interaction">
    <interactant intactId="EBI-318539">
        <id>Q18953</id>
    </interactant>
    <interactant intactId="EBI-318539">
        <id>Q18953</id>
        <label>secs-1</label>
    </interactant>
    <organismsDiffer>false</organismsDiffer>
    <experiments>3</experiments>
</comment>
<comment type="subcellular location">
    <subcellularLocation>
        <location evidence="2">Cytoplasm</location>
    </subcellularLocation>
</comment>
<comment type="alternative products">
    <event type="alternative splicing"/>
    <isoform>
        <id>Q18953-1</id>
        <name>a</name>
        <sequence type="displayed"/>
    </isoform>
    <isoform>
        <id>Q18953-2</id>
        <name>b</name>
        <sequence type="described" ref="VSP_038162"/>
    </isoform>
</comment>
<comment type="similarity">
    <text evidence="3">Belongs to the SepSecS family.</text>
</comment>
<dbReference type="EC" id="2.9.1.2" evidence="2"/>
<dbReference type="EMBL" id="Z74030">
    <property type="protein sequence ID" value="CAA98446.1"/>
    <property type="molecule type" value="Genomic_DNA"/>
</dbReference>
<dbReference type="EMBL" id="Z74030">
    <property type="protein sequence ID" value="CAR64661.1"/>
    <property type="molecule type" value="Genomic_DNA"/>
</dbReference>
<dbReference type="PIR" id="T20309">
    <property type="entry name" value="T20309"/>
</dbReference>
<dbReference type="RefSeq" id="NP_001129887.1">
    <molecule id="Q18953-2"/>
    <property type="nucleotide sequence ID" value="NM_001136415.3"/>
</dbReference>
<dbReference type="RefSeq" id="NP_505761.1">
    <molecule id="Q18953-1"/>
    <property type="nucleotide sequence ID" value="NM_073360.4"/>
</dbReference>
<dbReference type="SMR" id="Q18953"/>
<dbReference type="BioGRID" id="44527">
    <property type="interactions" value="11"/>
</dbReference>
<dbReference type="DIP" id="DIP-26886N"/>
<dbReference type="FunCoup" id="Q18953">
    <property type="interactions" value="2184"/>
</dbReference>
<dbReference type="IntAct" id="Q18953">
    <property type="interactions" value="9"/>
</dbReference>
<dbReference type="MINT" id="Q18953"/>
<dbReference type="STRING" id="6239.D1054.13b.1"/>
<dbReference type="PaxDb" id="6239-D1054.13b"/>
<dbReference type="PeptideAtlas" id="Q18953"/>
<dbReference type="EnsemblMetazoa" id="D1054.13a.1">
    <molecule id="Q18953-1"/>
    <property type="protein sequence ID" value="D1054.13a.1"/>
    <property type="gene ID" value="WBGene00008379"/>
</dbReference>
<dbReference type="EnsemblMetazoa" id="D1054.13b.1">
    <molecule id="Q18953-2"/>
    <property type="protein sequence ID" value="D1054.13b.1"/>
    <property type="gene ID" value="WBGene00008379"/>
</dbReference>
<dbReference type="GeneID" id="179498"/>
<dbReference type="KEGG" id="cel:CELE_D1054.13"/>
<dbReference type="AGR" id="WB:WBGene00008379"/>
<dbReference type="CTD" id="179498"/>
<dbReference type="WormBase" id="D1054.13a">
    <molecule id="Q18953-1"/>
    <property type="protein sequence ID" value="CE05531"/>
    <property type="gene ID" value="WBGene00008379"/>
    <property type="gene designation" value="secs-1"/>
</dbReference>
<dbReference type="WormBase" id="D1054.13b">
    <molecule id="Q18953-2"/>
    <property type="protein sequence ID" value="CE43036"/>
    <property type="gene ID" value="WBGene00008379"/>
    <property type="gene designation" value="secs-1"/>
</dbReference>
<dbReference type="eggNOG" id="KOG3843">
    <property type="taxonomic scope" value="Eukaryota"/>
</dbReference>
<dbReference type="GeneTree" id="ENSGT00390000007332"/>
<dbReference type="HOGENOM" id="CLU_022508_0_0_1"/>
<dbReference type="InParanoid" id="Q18953"/>
<dbReference type="OMA" id="MSHANDY"/>
<dbReference type="OrthoDB" id="10263545at2759"/>
<dbReference type="PhylomeDB" id="Q18953"/>
<dbReference type="UniPathway" id="UPA00906">
    <property type="reaction ID" value="UER00898"/>
</dbReference>
<dbReference type="PRO" id="PR:Q18953"/>
<dbReference type="Proteomes" id="UP000001940">
    <property type="component" value="Chromosome V"/>
</dbReference>
<dbReference type="Bgee" id="WBGene00008379">
    <property type="expression patterns" value="Expressed in germ line (C elegans) and 4 other cell types or tissues"/>
</dbReference>
<dbReference type="GO" id="GO:0005737">
    <property type="term" value="C:cytoplasm"/>
    <property type="evidence" value="ECO:0007669"/>
    <property type="project" value="UniProtKB-SubCell"/>
</dbReference>
<dbReference type="GO" id="GO:0042802">
    <property type="term" value="F:identical protein binding"/>
    <property type="evidence" value="ECO:0000353"/>
    <property type="project" value="IntAct"/>
</dbReference>
<dbReference type="GO" id="GO:0098621">
    <property type="term" value="F:O-phosphoseryl-tRNA(Sec) selenium transferase activity"/>
    <property type="evidence" value="ECO:0007669"/>
    <property type="project" value="UniProtKB-EC"/>
</dbReference>
<dbReference type="GO" id="GO:0000049">
    <property type="term" value="F:tRNA binding"/>
    <property type="evidence" value="ECO:0000318"/>
    <property type="project" value="GO_Central"/>
</dbReference>
<dbReference type="GO" id="GO:0001717">
    <property type="term" value="P:conversion of seryl-tRNAsec to selenocys-tRNAsec"/>
    <property type="evidence" value="ECO:0007669"/>
    <property type="project" value="InterPro"/>
</dbReference>
<dbReference type="GO" id="GO:0001514">
    <property type="term" value="P:selenocysteine incorporation"/>
    <property type="evidence" value="ECO:0000318"/>
    <property type="project" value="GO_Central"/>
</dbReference>
<dbReference type="Gene3D" id="3.40.640.10">
    <property type="entry name" value="Type I PLP-dependent aspartate aminotransferase-like (Major domain)"/>
    <property type="match status" value="1"/>
</dbReference>
<dbReference type="InterPro" id="IPR015424">
    <property type="entry name" value="PyrdxlP-dep_Trfase"/>
</dbReference>
<dbReference type="InterPro" id="IPR015421">
    <property type="entry name" value="PyrdxlP-dep_Trfase_major"/>
</dbReference>
<dbReference type="InterPro" id="IPR019872">
    <property type="entry name" value="Sec-tRNA_Se_transferase"/>
</dbReference>
<dbReference type="InterPro" id="IPR008829">
    <property type="entry name" value="SepSecS/SepCysS"/>
</dbReference>
<dbReference type="NCBIfam" id="TIGR03531">
    <property type="entry name" value="selenium_SpcS"/>
    <property type="match status" value="1"/>
</dbReference>
<dbReference type="PANTHER" id="PTHR12944:SF2">
    <property type="entry name" value="O-PHOSPHOSERYL-TRNA(SEC) SELENIUM TRANSFERASE"/>
    <property type="match status" value="1"/>
</dbReference>
<dbReference type="PANTHER" id="PTHR12944">
    <property type="entry name" value="SOLUBLE LIVER ANTIGEN/LIVER PANCREAS ANTIGEN"/>
    <property type="match status" value="1"/>
</dbReference>
<dbReference type="Pfam" id="PF05889">
    <property type="entry name" value="SepSecS"/>
    <property type="match status" value="1"/>
</dbReference>
<dbReference type="PIRSF" id="PIRSF017689">
    <property type="entry name" value="SepSecS"/>
    <property type="match status" value="1"/>
</dbReference>
<dbReference type="SUPFAM" id="SSF53383">
    <property type="entry name" value="PLP-dependent transferases"/>
    <property type="match status" value="1"/>
</dbReference>
<sequence>MKANFGKKEGEYSRLVSKSSNKLLNSLWEKKQIPEEGWSEHTLDLFLSWLSSHDTNNRVDMIPVGAGEREGRVLTPLVQRLHSNLTHGIGRSGNLLEIQPKALGSSMLACLSNEFAKHALHLLGLHAVKSCIVVPLCTGMSLSLCMTSWRRRRPKAKYVVWLRIDQKSSLKSIYHAGFEPIIVEPIRDRDSLITDVETVNRIIEQRGEEILCVMTTTSCFAPRSPDNVEAISAICAAHDVPHLVNNAYGLQSEETIRKIAAAHECGRVDAVVQSLDKNFQVPVGGAVIAAFKQNHIQSIAQSYPGRASSVPSRDLVLTLLYQGQSAFLEPFGKQKQMFLKMRRKLISFAENIGECVYEVPENEISSAMTLSTIPPAKQTLFGSILFAKGITGARVVTSSQSKTTIEGCEFINFGSHTTEQHGGYLNIACSVGMTDHELEELFTRLTSSYAKFVRELAKEDERINSSGRRIPINESFDMEND</sequence>
<gene>
    <name type="primary">secs-1</name>
    <name type="ORF">D1054.13</name>
</gene>
<name>SPCS_CAEEL</name>
<protein>
    <recommendedName>
        <fullName>O-phosphoseryl-tRNA(Sec) selenium transferase</fullName>
        <ecNumber evidence="2">2.9.1.2</ecNumber>
    </recommendedName>
    <alternativeName>
        <fullName>Selenocysteine synthase</fullName>
        <shortName>Sec synthase</shortName>
    </alternativeName>
    <alternativeName>
        <fullName>Selenocysteinyl-tRNA(Sec) synthase</fullName>
    </alternativeName>
    <alternativeName>
        <fullName>Sep-tRNA:Sec-tRNA synthase</fullName>
        <shortName>SepSecS</shortName>
    </alternativeName>
    <alternativeName>
        <fullName>UGA suppressor tRNA-associated protein homolog</fullName>
    </alternativeName>
</protein>
<feature type="chain" id="PRO_0000219880" description="O-phosphoseryl-tRNA(Sec) selenium transferase">
    <location>
        <begin position="1"/>
        <end position="481"/>
    </location>
</feature>
<feature type="region of interest" description="Tetramerization" evidence="2">
    <location>
        <begin position="1"/>
        <end position="36"/>
    </location>
</feature>
<feature type="region of interest" description="Phosphate loop (P-loop)" evidence="2">
    <location>
        <begin position="90"/>
        <end position="100"/>
    </location>
</feature>
<feature type="binding site" evidence="2">
    <location>
        <position position="69"/>
    </location>
    <ligand>
        <name>pyridoxal 5'-phosphate</name>
        <dbReference type="ChEBI" id="CHEBI:597326"/>
    </ligand>
</feature>
<feature type="binding site" evidence="2">
    <location>
        <position position="91"/>
    </location>
    <ligand>
        <name>substrate</name>
    </ligand>
</feature>
<feature type="binding site" evidence="2">
    <location>
        <position position="92"/>
    </location>
    <ligand>
        <name>substrate</name>
    </ligand>
</feature>
<feature type="binding site" evidence="2">
    <location>
        <position position="99"/>
    </location>
    <ligand>
        <name>substrate</name>
    </ligand>
</feature>
<feature type="binding site" evidence="2">
    <location>
        <position position="306"/>
    </location>
    <ligand>
        <name>substrate</name>
    </ligand>
</feature>
<feature type="site" description="May act as a substrate filter by repelling compounds with a negatively charged alpha-carboxylate" evidence="1">
    <location>
        <position position="68"/>
    </location>
</feature>
<feature type="modified residue" description="N6-(pyridoxal phosphate)lysine" evidence="2">
    <location>
        <position position="277"/>
    </location>
</feature>
<feature type="splice variant" id="VSP_038162" description="In isoform b." evidence="3">
    <original>M</original>
    <variation>MSFEKLLMNLPGHTECACLPLCVDCQSRVDDCVSGRTARSEDM</variation>
    <location>
        <position position="1"/>
    </location>
</feature>
<reference key="1">
    <citation type="journal article" date="1998" name="Science">
        <title>Genome sequence of the nematode C. elegans: a platform for investigating biology.</title>
        <authorList>
            <consortium name="The C. elegans sequencing consortium"/>
        </authorList>
    </citation>
    <scope>NUCLEOTIDE SEQUENCE [LARGE SCALE GENOMIC DNA]</scope>
    <scope>ALTERNATIVE SPLICING</scope>
    <source>
        <strain>Bristol N2</strain>
    </source>
</reference>